<dbReference type="EC" id="3.4.21.-" evidence="7"/>
<dbReference type="EMBL" id="AB020742">
    <property type="protein sequence ID" value="BAB10943.1"/>
    <property type="molecule type" value="Genomic_DNA"/>
</dbReference>
<dbReference type="EMBL" id="CP002688">
    <property type="protein sequence ID" value="AED98299.1"/>
    <property type="molecule type" value="Genomic_DNA"/>
</dbReference>
<dbReference type="EMBL" id="BT012577">
    <property type="protein sequence ID" value="AAS99721.1"/>
    <property type="molecule type" value="mRNA"/>
</dbReference>
<dbReference type="EMBL" id="AK222002">
    <property type="protein sequence ID" value="BAD94613.1"/>
    <property type="molecule type" value="mRNA"/>
</dbReference>
<dbReference type="RefSeq" id="NP_569044.1">
    <property type="nucleotide sequence ID" value="NM_126109.3"/>
</dbReference>
<dbReference type="SMR" id="Q9FHA4"/>
<dbReference type="FunCoup" id="Q9FHA4">
    <property type="interactions" value="3"/>
</dbReference>
<dbReference type="STRING" id="3702.Q9FHA4"/>
<dbReference type="MEROPS" id="S08.A16"/>
<dbReference type="GlyCosmos" id="Q9FHA4">
    <property type="glycosylation" value="6 sites, No reported glycans"/>
</dbReference>
<dbReference type="GlyGen" id="Q9FHA4">
    <property type="glycosylation" value="6 sites"/>
</dbReference>
<dbReference type="PaxDb" id="3702-AT5G67090.1"/>
<dbReference type="ProteomicsDB" id="232901"/>
<dbReference type="EnsemblPlants" id="AT5G67090.1">
    <property type="protein sequence ID" value="AT5G67090.1"/>
    <property type="gene ID" value="AT5G67090"/>
</dbReference>
<dbReference type="GeneID" id="836844"/>
<dbReference type="Gramene" id="AT5G67090.1">
    <property type="protein sequence ID" value="AT5G67090.1"/>
    <property type="gene ID" value="AT5G67090"/>
</dbReference>
<dbReference type="KEGG" id="ath:AT5G67090"/>
<dbReference type="Araport" id="AT5G67090"/>
<dbReference type="TAIR" id="AT5G67090">
    <property type="gene designation" value="SBT1.9"/>
</dbReference>
<dbReference type="eggNOG" id="ENOG502QT5U">
    <property type="taxonomic scope" value="Eukaryota"/>
</dbReference>
<dbReference type="HOGENOM" id="CLU_000625_3_1_1"/>
<dbReference type="InParanoid" id="Q9FHA4"/>
<dbReference type="OMA" id="INFLCHE"/>
<dbReference type="OrthoDB" id="206201at2759"/>
<dbReference type="PhylomeDB" id="Q9FHA4"/>
<dbReference type="BRENDA" id="3.4.21.62">
    <property type="organism ID" value="399"/>
</dbReference>
<dbReference type="PRO" id="PR:Q9FHA4"/>
<dbReference type="Proteomes" id="UP000006548">
    <property type="component" value="Chromosome 5"/>
</dbReference>
<dbReference type="ExpressionAtlas" id="Q9FHA4">
    <property type="expression patterns" value="baseline and differential"/>
</dbReference>
<dbReference type="GO" id="GO:0005576">
    <property type="term" value="C:extracellular region"/>
    <property type="evidence" value="ECO:0007669"/>
    <property type="project" value="UniProtKB-SubCell"/>
</dbReference>
<dbReference type="GO" id="GO:0004252">
    <property type="term" value="F:serine-type endopeptidase activity"/>
    <property type="evidence" value="ECO:0000314"/>
    <property type="project" value="TAIR"/>
</dbReference>
<dbReference type="GO" id="GO:0006508">
    <property type="term" value="P:proteolysis"/>
    <property type="evidence" value="ECO:0000314"/>
    <property type="project" value="TAIR"/>
</dbReference>
<dbReference type="CDD" id="cd04852">
    <property type="entry name" value="Peptidases_S8_3"/>
    <property type="match status" value="1"/>
</dbReference>
<dbReference type="FunFam" id="3.40.50.200:FF:000006">
    <property type="entry name" value="Subtilisin-like protease SBT1.5"/>
    <property type="match status" value="1"/>
</dbReference>
<dbReference type="FunFam" id="3.30.70.80:FF:000003">
    <property type="entry name" value="Subtilisin-like protease SBT1.9"/>
    <property type="match status" value="1"/>
</dbReference>
<dbReference type="FunFam" id="2.60.40.2310:FF:000004">
    <property type="entry name" value="Subtilisin-like protease SBT3"/>
    <property type="match status" value="1"/>
</dbReference>
<dbReference type="Gene3D" id="2.60.40.2310">
    <property type="match status" value="1"/>
</dbReference>
<dbReference type="Gene3D" id="3.50.30.30">
    <property type="match status" value="1"/>
</dbReference>
<dbReference type="Gene3D" id="3.30.70.80">
    <property type="entry name" value="Peptidase S8 propeptide/proteinase inhibitor I9"/>
    <property type="match status" value="1"/>
</dbReference>
<dbReference type="Gene3D" id="3.40.50.200">
    <property type="entry name" value="Peptidase S8/S53 domain"/>
    <property type="match status" value="1"/>
</dbReference>
<dbReference type="InterPro" id="IPR000209">
    <property type="entry name" value="Peptidase_S8/S53_dom"/>
</dbReference>
<dbReference type="InterPro" id="IPR036852">
    <property type="entry name" value="Peptidase_S8/S53_dom_sf"/>
</dbReference>
<dbReference type="InterPro" id="IPR023827">
    <property type="entry name" value="Peptidase_S8_Asp-AS"/>
</dbReference>
<dbReference type="InterPro" id="IPR023828">
    <property type="entry name" value="Peptidase_S8_Ser-AS"/>
</dbReference>
<dbReference type="InterPro" id="IPR015500">
    <property type="entry name" value="Peptidase_S8_subtilisin-rel"/>
</dbReference>
<dbReference type="InterPro" id="IPR034197">
    <property type="entry name" value="Peptidases_S8_3"/>
</dbReference>
<dbReference type="InterPro" id="IPR010259">
    <property type="entry name" value="S8pro/Inhibitor_I9"/>
</dbReference>
<dbReference type="InterPro" id="IPR037045">
    <property type="entry name" value="S8pro/Inhibitor_I9_sf"/>
</dbReference>
<dbReference type="InterPro" id="IPR045051">
    <property type="entry name" value="SBT"/>
</dbReference>
<dbReference type="InterPro" id="IPR041469">
    <property type="entry name" value="Subtilisin-like_FN3"/>
</dbReference>
<dbReference type="PANTHER" id="PTHR10795">
    <property type="entry name" value="PROPROTEIN CONVERTASE SUBTILISIN/KEXIN"/>
    <property type="match status" value="1"/>
</dbReference>
<dbReference type="Pfam" id="PF17766">
    <property type="entry name" value="fn3_6"/>
    <property type="match status" value="1"/>
</dbReference>
<dbReference type="Pfam" id="PF05922">
    <property type="entry name" value="Inhibitor_I9"/>
    <property type="match status" value="1"/>
</dbReference>
<dbReference type="Pfam" id="PF00082">
    <property type="entry name" value="Peptidase_S8"/>
    <property type="match status" value="1"/>
</dbReference>
<dbReference type="PRINTS" id="PR00723">
    <property type="entry name" value="SUBTILISIN"/>
</dbReference>
<dbReference type="SUPFAM" id="SSF52743">
    <property type="entry name" value="Subtilisin-like"/>
    <property type="match status" value="1"/>
</dbReference>
<dbReference type="PROSITE" id="PS51892">
    <property type="entry name" value="SUBTILASE"/>
    <property type="match status" value="1"/>
</dbReference>
<dbReference type="PROSITE" id="PS00136">
    <property type="entry name" value="SUBTILASE_ASP"/>
    <property type="match status" value="1"/>
</dbReference>
<dbReference type="PROSITE" id="PS00138">
    <property type="entry name" value="SUBTILASE_SER"/>
    <property type="match status" value="1"/>
</dbReference>
<comment type="subcellular location">
    <subcellularLocation>
        <location evidence="2">Secreted</location>
    </subcellularLocation>
</comment>
<comment type="similarity">
    <text evidence="9">Belongs to the peptidase S8 family.</text>
</comment>
<feature type="signal peptide" evidence="4">
    <location>
        <begin position="1"/>
        <end position="20"/>
    </location>
</feature>
<feature type="propeptide" id="PRO_0000435178" description="Activation peptide" evidence="3">
    <location>
        <begin position="21"/>
        <end position="101"/>
    </location>
</feature>
<feature type="chain" id="PRO_5004325411" description="Subtilisin-like protease SBT1.9">
    <location>
        <begin position="102"/>
        <end status="unknown"/>
    </location>
</feature>
<feature type="propeptide" id="PRO_0000435179" evidence="1">
    <location>
        <begin status="unknown"/>
        <end position="736"/>
    </location>
</feature>
<feature type="domain" description="Inhibitor I9" evidence="4">
    <location>
        <begin position="25"/>
        <end position="101"/>
    </location>
</feature>
<feature type="domain" description="Peptidase S8" evidence="6">
    <location>
        <begin position="103"/>
        <end position="582"/>
    </location>
</feature>
<feature type="domain" description="PA" evidence="4">
    <location>
        <begin position="367"/>
        <end position="441"/>
    </location>
</feature>
<feature type="active site" description="Charge relay system" evidence="6">
    <location>
        <position position="133"/>
    </location>
</feature>
<feature type="active site" description="Charge relay system" evidence="6">
    <location>
        <position position="205"/>
    </location>
</feature>
<feature type="active site" description="Charge relay system" evidence="6">
    <location>
        <position position="529"/>
    </location>
</feature>
<feature type="glycosylation site" description="N-linked (GlcNAc...) asparagine" evidence="5">
    <location>
        <position position="112"/>
    </location>
</feature>
<feature type="glycosylation site" description="N-linked (GlcNAc...) asparagine" evidence="5">
    <location>
        <position position="162"/>
    </location>
</feature>
<feature type="glycosylation site" description="N-linked (GlcNAc...) asparagine" evidence="5">
    <location>
        <position position="220"/>
    </location>
</feature>
<feature type="glycosylation site" description="N-linked (GlcNAc...) asparagine" evidence="5">
    <location>
        <position position="381"/>
    </location>
</feature>
<feature type="glycosylation site" description="N-linked (GlcNAc...) asparagine" evidence="5">
    <location>
        <position position="453"/>
    </location>
</feature>
<feature type="glycosylation site" description="N-linked (GlcNAc...) asparagine" evidence="5">
    <location>
        <position position="617"/>
    </location>
</feature>
<sequence length="736" mass="79777">MGMTVVIILVFSFFVAIVTAETSPYIIHMDLSAKPLPFSDHRSWFSTTLTSVITNRKPKIIYAYTDSVHGFSAVLTNSELQRLKHKPGYVSFTKDLPVKLHTTFSPKFIGLNSTSGTWPVSNYGAGIVIGIIDTGIWPDSPSFHDDGVGSVPSKWKGACEFNSSSLCNKKLIGAKVFNKGLFANNPDLRETKIGQYSSPYDTIGHGTHVAAIAAGNHVKNASYFSYAQGTASGIAPHAHLAIYKAAWEEGIYSSDVIAAIDQAIRDGVHVISLSLGLSFEDDDDNDGFGLENDPIAVASFAAIQKGVFVVTSGGNDGPYYWSLINGAPWIMTVGAGTIGRQFQGTLTFGNRVSFSFPSLFPGEFPSVQFPVTYIESGSVENKTLANRIVVCNENINIGSKLHQIRSTGAAAVVLITDKLLEEQDTIKFQFPVAFIGSKHRETIESYASSNKNNATAKLEFRKTVIGTKPAPEVGTYSSRGPFTSFPQILKPDILAPGTLILSAWPSVEQITGTRALPLFSGFNLLTGTSMAAPHVAGVAALIKQVHPNWSPSAIKSAIMTTALTLDNPLAVGAGHVSTNKVLNPGLIYDTTPQDFINFLCHEAKQSRKLINIITRSNISDACKKPSPYLNYPSIIAYFTSDQSSPKIFKRTLTNVGEAKRSYIVRVRGLKGLNVVVEPKKLMFSEKNEKLSYTVRLESPRGLQENVVYGLVSWVDEDEAEFEVSCSVVATSLVQES</sequence>
<proteinExistence type="evidence at transcript level"/>
<name>SBT19_ARATH</name>
<gene>
    <name evidence="8" type="primary">SBT1.9</name>
    <name evidence="10" type="ordered locus">At5g67090</name>
    <name evidence="11" type="ORF">K21H1.5</name>
</gene>
<reference key="1">
    <citation type="journal article" date="2000" name="DNA Res.">
        <title>Structural analysis of Arabidopsis thaliana chromosome 5. X. Sequence features of the regions of 3,076,755 bp covered by sixty P1 and TAC clones.</title>
        <authorList>
            <person name="Sato S."/>
            <person name="Nakamura Y."/>
            <person name="Kaneko T."/>
            <person name="Katoh T."/>
            <person name="Asamizu E."/>
            <person name="Kotani H."/>
            <person name="Tabata S."/>
        </authorList>
    </citation>
    <scope>NUCLEOTIDE SEQUENCE [LARGE SCALE GENOMIC DNA]</scope>
    <source>
        <strain>cv. Columbia</strain>
    </source>
</reference>
<reference key="2">
    <citation type="journal article" date="2017" name="Plant J.">
        <title>Araport11: a complete reannotation of the Arabidopsis thaliana reference genome.</title>
        <authorList>
            <person name="Cheng C.Y."/>
            <person name="Krishnakumar V."/>
            <person name="Chan A.P."/>
            <person name="Thibaud-Nissen F."/>
            <person name="Schobel S."/>
            <person name="Town C.D."/>
        </authorList>
    </citation>
    <scope>GENOME REANNOTATION</scope>
    <source>
        <strain>cv. Columbia</strain>
    </source>
</reference>
<reference key="3">
    <citation type="submission" date="2004-04" db="EMBL/GenBank/DDBJ databases">
        <title>Arabidopsis ORF clones.</title>
        <authorList>
            <person name="Shinn P."/>
            <person name="Chen H."/>
            <person name="Cheuk R.F."/>
            <person name="Kim C.J."/>
            <person name="Carninci P."/>
            <person name="Hayashizaki Y."/>
            <person name="Ishida J."/>
            <person name="Kamiya A."/>
            <person name="Kawai J."/>
            <person name="Narusaka M."/>
            <person name="Sakurai T."/>
            <person name="Satou M."/>
            <person name="Seki M."/>
            <person name="Shinozaki K."/>
            <person name="Ecker J.R."/>
        </authorList>
    </citation>
    <scope>NUCLEOTIDE SEQUENCE [LARGE SCALE MRNA]</scope>
    <source>
        <strain>cv. Columbia</strain>
    </source>
</reference>
<reference key="4">
    <citation type="submission" date="2005-03" db="EMBL/GenBank/DDBJ databases">
        <title>Large-scale analysis of RIKEN Arabidopsis full-length (RAFL) cDNAs.</title>
        <authorList>
            <person name="Totoki Y."/>
            <person name="Seki M."/>
            <person name="Ishida J."/>
            <person name="Nakajima M."/>
            <person name="Enju A."/>
            <person name="Kamiya A."/>
            <person name="Narusaka M."/>
            <person name="Shin-i T."/>
            <person name="Nakagawa M."/>
            <person name="Sakamoto N."/>
            <person name="Oishi K."/>
            <person name="Kohara Y."/>
            <person name="Kobayashi M."/>
            <person name="Toyoda A."/>
            <person name="Sakaki Y."/>
            <person name="Sakurai T."/>
            <person name="Iida K."/>
            <person name="Akiyama K."/>
            <person name="Satou M."/>
            <person name="Toyoda T."/>
            <person name="Konagaya A."/>
            <person name="Carninci P."/>
            <person name="Kawai J."/>
            <person name="Hayashizaki Y."/>
            <person name="Shinozaki K."/>
        </authorList>
    </citation>
    <scope>NUCLEOTIDE SEQUENCE [LARGE SCALE MRNA]</scope>
    <source>
        <strain>cv. Columbia</strain>
    </source>
</reference>
<reference key="5">
    <citation type="journal article" date="2005" name="PLoS Comput. Biol.">
        <title>Inferring hypotheses on functional relationships of genes: Analysis of the Arabidopsis thaliana subtilase gene family.</title>
        <authorList>
            <person name="Rautengarten C."/>
            <person name="Steinhauser D."/>
            <person name="Bussis D."/>
            <person name="Stintzi A."/>
            <person name="Schaller A."/>
            <person name="Kopka J."/>
            <person name="Altmann T."/>
        </authorList>
    </citation>
    <scope>GENE FAMILY</scope>
    <scope>NOMENCLATURE</scope>
</reference>
<organism>
    <name type="scientific">Arabidopsis thaliana</name>
    <name type="common">Mouse-ear cress</name>
    <dbReference type="NCBI Taxonomy" id="3702"/>
    <lineage>
        <taxon>Eukaryota</taxon>
        <taxon>Viridiplantae</taxon>
        <taxon>Streptophyta</taxon>
        <taxon>Embryophyta</taxon>
        <taxon>Tracheophyta</taxon>
        <taxon>Spermatophyta</taxon>
        <taxon>Magnoliopsida</taxon>
        <taxon>eudicotyledons</taxon>
        <taxon>Gunneridae</taxon>
        <taxon>Pentapetalae</taxon>
        <taxon>rosids</taxon>
        <taxon>malvids</taxon>
        <taxon>Brassicales</taxon>
        <taxon>Brassicaceae</taxon>
        <taxon>Camelineae</taxon>
        <taxon>Arabidopsis</taxon>
    </lineage>
</organism>
<evidence type="ECO:0000250" key="1">
    <source>
        <dbReference type="UniProtKB" id="Q39547"/>
    </source>
</evidence>
<evidence type="ECO:0000250" key="2">
    <source>
        <dbReference type="UniProtKB" id="Q84WS0"/>
    </source>
</evidence>
<evidence type="ECO:0000250" key="3">
    <source>
        <dbReference type="UniProtKB" id="Q9MAP7"/>
    </source>
</evidence>
<evidence type="ECO:0000255" key="4"/>
<evidence type="ECO:0000255" key="5">
    <source>
        <dbReference type="PROSITE-ProRule" id="PRU00498"/>
    </source>
</evidence>
<evidence type="ECO:0000255" key="6">
    <source>
        <dbReference type="PROSITE-ProRule" id="PRU01240"/>
    </source>
</evidence>
<evidence type="ECO:0000255" key="7">
    <source>
        <dbReference type="PROSITE-ProRule" id="PRU10082"/>
    </source>
</evidence>
<evidence type="ECO:0000303" key="8">
    <source>
    </source>
</evidence>
<evidence type="ECO:0000305" key="9"/>
<evidence type="ECO:0000312" key="10">
    <source>
        <dbReference type="Araport" id="AT5G67090"/>
    </source>
</evidence>
<evidence type="ECO:0000312" key="11">
    <source>
        <dbReference type="EMBL" id="BAB10943.1"/>
    </source>
</evidence>
<keyword id="KW-0068">Autocatalytic cleavage</keyword>
<keyword id="KW-0325">Glycoprotein</keyword>
<keyword id="KW-0378">Hydrolase</keyword>
<keyword id="KW-0645">Protease</keyword>
<keyword id="KW-1185">Reference proteome</keyword>
<keyword id="KW-0964">Secreted</keyword>
<keyword id="KW-0720">Serine protease</keyword>
<keyword id="KW-0732">Signal</keyword>
<keyword id="KW-0865">Zymogen</keyword>
<accession>Q9FHA4</accession>
<protein>
    <recommendedName>
        <fullName evidence="8">Subtilisin-like protease SBT1.9</fullName>
        <ecNumber evidence="7">3.4.21.-</ecNumber>
    </recommendedName>
    <alternativeName>
        <fullName evidence="8">Subtilase subfamily 1 member 9</fullName>
        <shortName evidence="8">AtSBT1.9</shortName>
    </alternativeName>
</protein>